<gene>
    <name type="ORF">AAEL000673</name>
</gene>
<feature type="chain" id="PRO_0000416163" description="ATP-dependent (S)-NAD(P)H-hydrate dehydratase">
    <location>
        <begin position="1"/>
        <end position="332"/>
    </location>
</feature>
<feature type="domain" description="YjeF C-terminal" evidence="1">
    <location>
        <begin position="46"/>
        <end position="326"/>
    </location>
</feature>
<feature type="binding site" evidence="1">
    <location>
        <position position="146"/>
    </location>
    <ligand>
        <name>(6S)-NADPHX</name>
        <dbReference type="ChEBI" id="CHEBI:64076"/>
    </ligand>
</feature>
<feature type="binding site" evidence="1">
    <location>
        <begin position="199"/>
        <end position="205"/>
    </location>
    <ligand>
        <name>(6S)-NADPHX</name>
        <dbReference type="ChEBI" id="CHEBI:64076"/>
    </ligand>
</feature>
<feature type="binding site" evidence="1">
    <location>
        <begin position="230"/>
        <end position="234"/>
    </location>
    <ligand>
        <name>ATP</name>
        <dbReference type="ChEBI" id="CHEBI:30616"/>
    </ligand>
</feature>
<feature type="binding site" evidence="1">
    <location>
        <begin position="251"/>
        <end position="260"/>
    </location>
    <ligand>
        <name>ATP</name>
        <dbReference type="ChEBI" id="CHEBI:30616"/>
    </ligand>
</feature>
<feature type="binding site" evidence="1">
    <location>
        <position position="261"/>
    </location>
    <ligand>
        <name>(6S)-NADPHX</name>
        <dbReference type="ChEBI" id="CHEBI:64076"/>
    </ligand>
</feature>
<dbReference type="EC" id="4.2.1.93" evidence="1"/>
<dbReference type="EMBL" id="CH477198">
    <property type="protein sequence ID" value="EAT48273.1"/>
    <property type="molecule type" value="Genomic_DNA"/>
</dbReference>
<dbReference type="RefSeq" id="XP_001649762.1">
    <property type="nucleotide sequence ID" value="XM_001649712.1"/>
</dbReference>
<dbReference type="SMR" id="Q17NP0"/>
<dbReference type="FunCoup" id="Q17NP0">
    <property type="interactions" value="262"/>
</dbReference>
<dbReference type="STRING" id="7159.Q17NP0"/>
<dbReference type="PaxDb" id="7159-AAEL000673-PA"/>
<dbReference type="GeneID" id="5565418"/>
<dbReference type="KEGG" id="aag:5565418"/>
<dbReference type="VEuPathDB" id="VectorBase:AAEL000673"/>
<dbReference type="eggNOG" id="KOG3974">
    <property type="taxonomic scope" value="Eukaryota"/>
</dbReference>
<dbReference type="HOGENOM" id="CLU_030651_3_0_1"/>
<dbReference type="InParanoid" id="Q17NP0"/>
<dbReference type="OMA" id="WRAAYHN"/>
<dbReference type="OrthoDB" id="8110916at2759"/>
<dbReference type="PhylomeDB" id="Q17NP0"/>
<dbReference type="Proteomes" id="UP000008820">
    <property type="component" value="Unassembled WGS sequence"/>
</dbReference>
<dbReference type="Proteomes" id="UP000682892">
    <property type="component" value="Chromosome 3"/>
</dbReference>
<dbReference type="GO" id="GO:0005524">
    <property type="term" value="F:ATP binding"/>
    <property type="evidence" value="ECO:0007669"/>
    <property type="project" value="UniProtKB-KW"/>
</dbReference>
<dbReference type="GO" id="GO:0047453">
    <property type="term" value="F:ATP-dependent NAD(P)H-hydrate dehydratase activity"/>
    <property type="evidence" value="ECO:0007669"/>
    <property type="project" value="UniProtKB-UniRule"/>
</dbReference>
<dbReference type="GO" id="GO:0110051">
    <property type="term" value="P:metabolite repair"/>
    <property type="evidence" value="ECO:0007669"/>
    <property type="project" value="TreeGrafter"/>
</dbReference>
<dbReference type="GO" id="GO:0046496">
    <property type="term" value="P:nicotinamide nucleotide metabolic process"/>
    <property type="evidence" value="ECO:0007669"/>
    <property type="project" value="UniProtKB-UniRule"/>
</dbReference>
<dbReference type="CDD" id="cd01171">
    <property type="entry name" value="YXKO-related"/>
    <property type="match status" value="1"/>
</dbReference>
<dbReference type="FunFam" id="3.40.1190.20:FF:000023">
    <property type="entry name" value="ATP-dependent (S)-NAD(P)H-hydrate dehydratase"/>
    <property type="match status" value="1"/>
</dbReference>
<dbReference type="Gene3D" id="3.40.1190.20">
    <property type="match status" value="1"/>
</dbReference>
<dbReference type="HAMAP" id="MF_01965">
    <property type="entry name" value="NADHX_dehydratase"/>
    <property type="match status" value="1"/>
</dbReference>
<dbReference type="InterPro" id="IPR000631">
    <property type="entry name" value="CARKD"/>
</dbReference>
<dbReference type="InterPro" id="IPR029056">
    <property type="entry name" value="Ribokinase-like"/>
</dbReference>
<dbReference type="NCBIfam" id="TIGR00196">
    <property type="entry name" value="yjeF_cterm"/>
    <property type="match status" value="1"/>
</dbReference>
<dbReference type="PANTHER" id="PTHR12592:SF0">
    <property type="entry name" value="ATP-DEPENDENT (S)-NAD(P)H-HYDRATE DEHYDRATASE"/>
    <property type="match status" value="1"/>
</dbReference>
<dbReference type="PANTHER" id="PTHR12592">
    <property type="entry name" value="ATP-DEPENDENT (S)-NAD(P)H-HYDRATE DEHYDRATASE FAMILY MEMBER"/>
    <property type="match status" value="1"/>
</dbReference>
<dbReference type="Pfam" id="PF01256">
    <property type="entry name" value="Carb_kinase"/>
    <property type="match status" value="1"/>
</dbReference>
<dbReference type="SUPFAM" id="SSF53613">
    <property type="entry name" value="Ribokinase-like"/>
    <property type="match status" value="1"/>
</dbReference>
<dbReference type="PROSITE" id="PS51383">
    <property type="entry name" value="YJEF_C_3"/>
    <property type="match status" value="1"/>
</dbReference>
<proteinExistence type="inferred from homology"/>
<protein>
    <recommendedName>
        <fullName evidence="1">ATP-dependent (S)-NAD(P)H-hydrate dehydratase</fullName>
        <ecNumber evidence="1">4.2.1.93</ecNumber>
    </recommendedName>
    <alternativeName>
        <fullName evidence="1">ATP-dependent NAD(P)HX dehydratase</fullName>
    </alternativeName>
</protein>
<name>NNRD_AEDAE</name>
<accession>Q17NP0</accession>
<comment type="function">
    <text evidence="1">Catalyzes the dehydration of the S-form of NAD(P)HX at the expense of ATP, which is converted to ADP. Together with NAD(P)HX epimerase, which catalyzes the epimerization of the S- and R-forms, the enzyme allows the repair of both epimers of NAD(P)HX, a damaged form of NAD(P)H that is a result of enzymatic or heat-dependent hydration.</text>
</comment>
<comment type="catalytic activity">
    <reaction evidence="1">
        <text>(6S)-NADHX + ATP = ADP + phosphate + NADH + H(+)</text>
        <dbReference type="Rhea" id="RHEA:19017"/>
        <dbReference type="ChEBI" id="CHEBI:15378"/>
        <dbReference type="ChEBI" id="CHEBI:30616"/>
        <dbReference type="ChEBI" id="CHEBI:43474"/>
        <dbReference type="ChEBI" id="CHEBI:57945"/>
        <dbReference type="ChEBI" id="CHEBI:64074"/>
        <dbReference type="ChEBI" id="CHEBI:456216"/>
        <dbReference type="EC" id="4.2.1.93"/>
    </reaction>
</comment>
<comment type="catalytic activity">
    <reaction>
        <text>(6S)-NADPHX + ATP = ADP + phosphate + NADPH + H(+)</text>
        <dbReference type="Rhea" id="RHEA:32231"/>
        <dbReference type="ChEBI" id="CHEBI:15378"/>
        <dbReference type="ChEBI" id="CHEBI:30616"/>
        <dbReference type="ChEBI" id="CHEBI:43474"/>
        <dbReference type="ChEBI" id="CHEBI:57783"/>
        <dbReference type="ChEBI" id="CHEBI:64076"/>
        <dbReference type="ChEBI" id="CHEBI:456216"/>
        <dbReference type="EC" id="4.2.1.93"/>
    </reaction>
</comment>
<comment type="cofactor">
    <cofactor evidence="1">
        <name>Mg(2+)</name>
        <dbReference type="ChEBI" id="CHEBI:18420"/>
    </cofactor>
</comment>
<comment type="similarity">
    <text evidence="1">Belongs to the NnrD/CARKD family.</text>
</comment>
<evidence type="ECO:0000255" key="1">
    <source>
        <dbReference type="HAMAP-Rule" id="MF_03157"/>
    </source>
</evidence>
<sequence length="332" mass="37048">MVLKLFLSKRPIFLHPHCVSSSCRNSDTTIRLSRRIATMSENKSPLLERARNIVPHLETHRHKGQAGRIGIVGGSLEYTGAPYFAAISALKVGADLVHVFCLQAAAQVIKSYSPELIVHPLLDSNDATMQIEPWLERLHVLVIGPGLGRDRLILQTVSELIKICRQLQKPLVIDADGLFLITHDISLVKDYYGVILTPNAIEFCRLFGNDRDRIMQTLEKLGRGVTVIEKGLNDRIYDSLTLEKYECPQGGSGRRCGGQGDLLAGALATFYFWALECKQEISPAVVACFAASYLTKNCNTYAFKAKGRSMTCTDMIEQIHNVFDDIFEHKKE</sequence>
<organism>
    <name type="scientific">Aedes aegypti</name>
    <name type="common">Yellowfever mosquito</name>
    <name type="synonym">Culex aegypti</name>
    <dbReference type="NCBI Taxonomy" id="7159"/>
    <lineage>
        <taxon>Eukaryota</taxon>
        <taxon>Metazoa</taxon>
        <taxon>Ecdysozoa</taxon>
        <taxon>Arthropoda</taxon>
        <taxon>Hexapoda</taxon>
        <taxon>Insecta</taxon>
        <taxon>Pterygota</taxon>
        <taxon>Neoptera</taxon>
        <taxon>Endopterygota</taxon>
        <taxon>Diptera</taxon>
        <taxon>Nematocera</taxon>
        <taxon>Culicoidea</taxon>
        <taxon>Culicidae</taxon>
        <taxon>Culicinae</taxon>
        <taxon>Aedini</taxon>
        <taxon>Aedes</taxon>
        <taxon>Stegomyia</taxon>
    </lineage>
</organism>
<reference key="1">
    <citation type="journal article" date="2007" name="Science">
        <title>Genome sequence of Aedes aegypti, a major arbovirus vector.</title>
        <authorList>
            <person name="Nene V."/>
            <person name="Wortman J.R."/>
            <person name="Lawson D."/>
            <person name="Haas B.J."/>
            <person name="Kodira C.D."/>
            <person name="Tu Z.J."/>
            <person name="Loftus B.J."/>
            <person name="Xi Z."/>
            <person name="Megy K."/>
            <person name="Grabherr M."/>
            <person name="Ren Q."/>
            <person name="Zdobnov E.M."/>
            <person name="Lobo N.F."/>
            <person name="Campbell K.S."/>
            <person name="Brown S.E."/>
            <person name="Bonaldo M.F."/>
            <person name="Zhu J."/>
            <person name="Sinkins S.P."/>
            <person name="Hogenkamp D.G."/>
            <person name="Amedeo P."/>
            <person name="Arensburger P."/>
            <person name="Atkinson P.W."/>
            <person name="Bidwell S.L."/>
            <person name="Biedler J."/>
            <person name="Birney E."/>
            <person name="Bruggner R.V."/>
            <person name="Costas J."/>
            <person name="Coy M.R."/>
            <person name="Crabtree J."/>
            <person name="Crawford M."/>
            <person name="DeBruyn B."/>
            <person name="DeCaprio D."/>
            <person name="Eiglmeier K."/>
            <person name="Eisenstadt E."/>
            <person name="El-Dorry H."/>
            <person name="Gelbart W.M."/>
            <person name="Gomes S.L."/>
            <person name="Hammond M."/>
            <person name="Hannick L.I."/>
            <person name="Hogan J.R."/>
            <person name="Holmes M.H."/>
            <person name="Jaffe D."/>
            <person name="Johnston S.J."/>
            <person name="Kennedy R.C."/>
            <person name="Koo H."/>
            <person name="Kravitz S."/>
            <person name="Kriventseva E.V."/>
            <person name="Kulp D."/>
            <person name="Labutti K."/>
            <person name="Lee E."/>
            <person name="Li S."/>
            <person name="Lovin D.D."/>
            <person name="Mao C."/>
            <person name="Mauceli E."/>
            <person name="Menck C.F."/>
            <person name="Miller J.R."/>
            <person name="Montgomery P."/>
            <person name="Mori A."/>
            <person name="Nascimento A.L."/>
            <person name="Naveira H.F."/>
            <person name="Nusbaum C."/>
            <person name="O'Leary S.B."/>
            <person name="Orvis J."/>
            <person name="Pertea M."/>
            <person name="Quesneville H."/>
            <person name="Reidenbach K.R."/>
            <person name="Rogers Y.-H.C."/>
            <person name="Roth C.W."/>
            <person name="Schneider J.R."/>
            <person name="Schatz M."/>
            <person name="Shumway M."/>
            <person name="Stanke M."/>
            <person name="Stinson E.O."/>
            <person name="Tubio J.M.C."/>
            <person name="Vanzee J.P."/>
            <person name="Verjovski-Almeida S."/>
            <person name="Werner D."/>
            <person name="White O.R."/>
            <person name="Wyder S."/>
            <person name="Zeng Q."/>
            <person name="Zhao Q."/>
            <person name="Zhao Y."/>
            <person name="Hill C.A."/>
            <person name="Raikhel A.S."/>
            <person name="Soares M.B."/>
            <person name="Knudson D.L."/>
            <person name="Lee N.H."/>
            <person name="Galagan J."/>
            <person name="Salzberg S.L."/>
            <person name="Paulsen I.T."/>
            <person name="Dimopoulos G."/>
            <person name="Collins F.H."/>
            <person name="Bruce B."/>
            <person name="Fraser-Liggett C.M."/>
            <person name="Severson D.W."/>
        </authorList>
    </citation>
    <scope>NUCLEOTIDE SEQUENCE [LARGE SCALE GENOMIC DNA]</scope>
    <source>
        <strain>LVPib12</strain>
    </source>
</reference>
<keyword id="KW-0067">ATP-binding</keyword>
<keyword id="KW-0456">Lyase</keyword>
<keyword id="KW-0520">NAD</keyword>
<keyword id="KW-0521">NADP</keyword>
<keyword id="KW-0547">Nucleotide-binding</keyword>
<keyword id="KW-0597">Phosphoprotein</keyword>
<keyword id="KW-1185">Reference proteome</keyword>